<comment type="subcellular location">
    <subcellularLocation>
        <location evidence="2">Mitochondrion</location>
    </subcellularLocation>
</comment>
<comment type="similarity">
    <text evidence="2">Belongs to the PPR family. P subfamily.</text>
</comment>
<comment type="online information" name="Pentatricopeptide repeat proteins">
    <link uri="https://ppr.plantenergy.uwa.edu.au"/>
</comment>
<sequence length="599" mass="68562">MAAAPWLHLSRRRSSTQTSLRSFLICSSSFDSDEFISSQSRVIGGRGEEEVRFSGALFSRMIHSSTYHPYRQIPLPHSSVQLLDASLGCRGFSSGSSNVSDGCDEEVESECDNDEETGVSCVESSTNPEEVERVCKVIDELFALDRNMEAVLDEMKLDLSHDLIVEVLERFRHARKPAFRFFCWAAERQGFAHDSRTYNSMMSILAKTRQFETMVSVLEEMGTKGLLTMETFTIAMKAFAAAKERKKAVGIFELMKKYKFKIGVETINCLLDSLGRAKLGKEAQVLFDKLKERFTPNMMTYTVLLNGWCRVRNLIEAARIWNDMIDQGLKPDIVAHNVMLEGLLRSRKKSDAIKLFHVMKSKGPCPNVRSYTIMIRDFCKQSSMETAIEYFDDMVDSGLQPDAAVYTCLITGFGTQKKLDTVYELLKEMQEKGHPPDGKTYNALIKLMANQKMPEHATRIYNKMIQNEIEPSIHTFNMIMKSYFMARNYEMGRAVWEEMIKKGICPDDNSYTVLIRGLIGEGKSREACRYLEEMLDKGMKTPLIDYNKFAADFHRGGQPEIFEELAQRAKFSGKFAAAEIFARWAQMTRRRFKQRFMED</sequence>
<keyword id="KW-0496">Mitochondrion</keyword>
<keyword id="KW-1185">Reference proteome</keyword>
<keyword id="KW-0677">Repeat</keyword>
<keyword id="KW-0809">Transit peptide</keyword>
<reference key="1">
    <citation type="journal article" date="2000" name="Nature">
        <title>Sequence and analysis of chromosome 3 of the plant Arabidopsis thaliana.</title>
        <authorList>
            <person name="Salanoubat M."/>
            <person name="Lemcke K."/>
            <person name="Rieger M."/>
            <person name="Ansorge W."/>
            <person name="Unseld M."/>
            <person name="Fartmann B."/>
            <person name="Valle G."/>
            <person name="Bloecker H."/>
            <person name="Perez-Alonso M."/>
            <person name="Obermaier B."/>
            <person name="Delseny M."/>
            <person name="Boutry M."/>
            <person name="Grivell L.A."/>
            <person name="Mache R."/>
            <person name="Puigdomenech P."/>
            <person name="De Simone V."/>
            <person name="Choisne N."/>
            <person name="Artiguenave F."/>
            <person name="Robert C."/>
            <person name="Brottier P."/>
            <person name="Wincker P."/>
            <person name="Cattolico L."/>
            <person name="Weissenbach J."/>
            <person name="Saurin W."/>
            <person name="Quetier F."/>
            <person name="Schaefer M."/>
            <person name="Mueller-Auer S."/>
            <person name="Gabel C."/>
            <person name="Fuchs M."/>
            <person name="Benes V."/>
            <person name="Wurmbach E."/>
            <person name="Drzonek H."/>
            <person name="Erfle H."/>
            <person name="Jordan N."/>
            <person name="Bangert S."/>
            <person name="Wiedelmann R."/>
            <person name="Kranz H."/>
            <person name="Voss H."/>
            <person name="Holland R."/>
            <person name="Brandt P."/>
            <person name="Nyakatura G."/>
            <person name="Vezzi A."/>
            <person name="D'Angelo M."/>
            <person name="Pallavicini A."/>
            <person name="Toppo S."/>
            <person name="Simionati B."/>
            <person name="Conrad A."/>
            <person name="Hornischer K."/>
            <person name="Kauer G."/>
            <person name="Loehnert T.-H."/>
            <person name="Nordsiek G."/>
            <person name="Reichelt J."/>
            <person name="Scharfe M."/>
            <person name="Schoen O."/>
            <person name="Bargues M."/>
            <person name="Terol J."/>
            <person name="Climent J."/>
            <person name="Navarro P."/>
            <person name="Collado C."/>
            <person name="Perez-Perez A."/>
            <person name="Ottenwaelder B."/>
            <person name="Duchemin D."/>
            <person name="Cooke R."/>
            <person name="Laudie M."/>
            <person name="Berger-Llauro C."/>
            <person name="Purnelle B."/>
            <person name="Masuy D."/>
            <person name="de Haan M."/>
            <person name="Maarse A.C."/>
            <person name="Alcaraz J.-P."/>
            <person name="Cottet A."/>
            <person name="Casacuberta E."/>
            <person name="Monfort A."/>
            <person name="Argiriou A."/>
            <person name="Flores M."/>
            <person name="Liguori R."/>
            <person name="Vitale D."/>
            <person name="Mannhaupt G."/>
            <person name="Haase D."/>
            <person name="Schoof H."/>
            <person name="Rudd S."/>
            <person name="Zaccaria P."/>
            <person name="Mewes H.-W."/>
            <person name="Mayer K.F.X."/>
            <person name="Kaul S."/>
            <person name="Town C.D."/>
            <person name="Koo H.L."/>
            <person name="Tallon L.J."/>
            <person name="Jenkins J."/>
            <person name="Rooney T."/>
            <person name="Rizzo M."/>
            <person name="Walts A."/>
            <person name="Utterback T."/>
            <person name="Fujii C.Y."/>
            <person name="Shea T.P."/>
            <person name="Creasy T.H."/>
            <person name="Haas B."/>
            <person name="Maiti R."/>
            <person name="Wu D."/>
            <person name="Peterson J."/>
            <person name="Van Aken S."/>
            <person name="Pai G."/>
            <person name="Militscher J."/>
            <person name="Sellers P."/>
            <person name="Gill J.E."/>
            <person name="Feldblyum T.V."/>
            <person name="Preuss D."/>
            <person name="Lin X."/>
            <person name="Nierman W.C."/>
            <person name="Salzberg S.L."/>
            <person name="White O."/>
            <person name="Venter J.C."/>
            <person name="Fraser C.M."/>
            <person name="Kaneko T."/>
            <person name="Nakamura Y."/>
            <person name="Sato S."/>
            <person name="Kato T."/>
            <person name="Asamizu E."/>
            <person name="Sasamoto S."/>
            <person name="Kimura T."/>
            <person name="Idesawa K."/>
            <person name="Kawashima K."/>
            <person name="Kishida Y."/>
            <person name="Kiyokawa C."/>
            <person name="Kohara M."/>
            <person name="Matsumoto M."/>
            <person name="Matsuno A."/>
            <person name="Muraki A."/>
            <person name="Nakayama S."/>
            <person name="Nakazaki N."/>
            <person name="Shinpo S."/>
            <person name="Takeuchi C."/>
            <person name="Wada T."/>
            <person name="Watanabe A."/>
            <person name="Yamada M."/>
            <person name="Yasuda M."/>
            <person name="Tabata S."/>
        </authorList>
    </citation>
    <scope>NUCLEOTIDE SEQUENCE [LARGE SCALE GENOMIC DNA]</scope>
    <source>
        <strain>cv. Columbia</strain>
    </source>
</reference>
<reference key="2">
    <citation type="journal article" date="2017" name="Plant J.">
        <title>Araport11: a complete reannotation of the Arabidopsis thaliana reference genome.</title>
        <authorList>
            <person name="Cheng C.Y."/>
            <person name="Krishnakumar V."/>
            <person name="Chan A.P."/>
            <person name="Thibaud-Nissen F."/>
            <person name="Schobel S."/>
            <person name="Town C.D."/>
        </authorList>
    </citation>
    <scope>GENOME REANNOTATION</scope>
    <source>
        <strain>cv. Columbia</strain>
    </source>
</reference>
<reference key="3">
    <citation type="journal article" date="2003" name="Science">
        <title>Empirical analysis of transcriptional activity in the Arabidopsis genome.</title>
        <authorList>
            <person name="Yamada K."/>
            <person name="Lim J."/>
            <person name="Dale J.M."/>
            <person name="Chen H."/>
            <person name="Shinn P."/>
            <person name="Palm C.J."/>
            <person name="Southwick A.M."/>
            <person name="Wu H.C."/>
            <person name="Kim C.J."/>
            <person name="Nguyen M."/>
            <person name="Pham P.K."/>
            <person name="Cheuk R.F."/>
            <person name="Karlin-Newmann G."/>
            <person name="Liu S.X."/>
            <person name="Lam B."/>
            <person name="Sakano H."/>
            <person name="Wu T."/>
            <person name="Yu G."/>
            <person name="Miranda M."/>
            <person name="Quach H.L."/>
            <person name="Tripp M."/>
            <person name="Chang C.H."/>
            <person name="Lee J.M."/>
            <person name="Toriumi M.J."/>
            <person name="Chan M.M."/>
            <person name="Tang C.C."/>
            <person name="Onodera C.S."/>
            <person name="Deng J.M."/>
            <person name="Akiyama K."/>
            <person name="Ansari Y."/>
            <person name="Arakawa T."/>
            <person name="Banh J."/>
            <person name="Banno F."/>
            <person name="Bowser L."/>
            <person name="Brooks S.Y."/>
            <person name="Carninci P."/>
            <person name="Chao Q."/>
            <person name="Choy N."/>
            <person name="Enju A."/>
            <person name="Goldsmith A.D."/>
            <person name="Gurjal M."/>
            <person name="Hansen N.F."/>
            <person name="Hayashizaki Y."/>
            <person name="Johnson-Hopson C."/>
            <person name="Hsuan V.W."/>
            <person name="Iida K."/>
            <person name="Karnes M."/>
            <person name="Khan S."/>
            <person name="Koesema E."/>
            <person name="Ishida J."/>
            <person name="Jiang P.X."/>
            <person name="Jones T."/>
            <person name="Kawai J."/>
            <person name="Kamiya A."/>
            <person name="Meyers C."/>
            <person name="Nakajima M."/>
            <person name="Narusaka M."/>
            <person name="Seki M."/>
            <person name="Sakurai T."/>
            <person name="Satou M."/>
            <person name="Tamse R."/>
            <person name="Vaysberg M."/>
            <person name="Wallender E.K."/>
            <person name="Wong C."/>
            <person name="Yamamura Y."/>
            <person name="Yuan S."/>
            <person name="Shinozaki K."/>
            <person name="Davis R.W."/>
            <person name="Theologis A."/>
            <person name="Ecker J.R."/>
        </authorList>
    </citation>
    <scope>NUCLEOTIDE SEQUENCE [LARGE SCALE MRNA]</scope>
    <source>
        <strain>cv. Columbia</strain>
    </source>
</reference>
<reference key="4">
    <citation type="journal article" date="2004" name="Plant Cell">
        <title>Genome-wide analysis of Arabidopsis pentatricopeptide repeat proteins reveals their essential role in organelle biogenesis.</title>
        <authorList>
            <person name="Lurin C."/>
            <person name="Andres C."/>
            <person name="Aubourg S."/>
            <person name="Bellaoui M."/>
            <person name="Bitton F."/>
            <person name="Bruyere C."/>
            <person name="Caboche M."/>
            <person name="Debast C."/>
            <person name="Gualberto J."/>
            <person name="Hoffmann B."/>
            <person name="Lecharny A."/>
            <person name="Le Ret M."/>
            <person name="Martin-Magniette M.-L."/>
            <person name="Mireau H."/>
            <person name="Peeters N."/>
            <person name="Renou J.-P."/>
            <person name="Szurek B."/>
            <person name="Taconnat L."/>
            <person name="Small I."/>
        </authorList>
    </citation>
    <scope>GENE FAMILY</scope>
</reference>
<proteinExistence type="evidence at transcript level"/>
<evidence type="ECO:0000255" key="1"/>
<evidence type="ECO:0000305" key="2"/>
<organism>
    <name type="scientific">Arabidopsis thaliana</name>
    <name type="common">Mouse-ear cress</name>
    <dbReference type="NCBI Taxonomy" id="3702"/>
    <lineage>
        <taxon>Eukaryota</taxon>
        <taxon>Viridiplantae</taxon>
        <taxon>Streptophyta</taxon>
        <taxon>Embryophyta</taxon>
        <taxon>Tracheophyta</taxon>
        <taxon>Spermatophyta</taxon>
        <taxon>Magnoliopsida</taxon>
        <taxon>eudicotyledons</taxon>
        <taxon>Gunneridae</taxon>
        <taxon>Pentapetalae</taxon>
        <taxon>rosids</taxon>
        <taxon>malvids</taxon>
        <taxon>Brassicales</taxon>
        <taxon>Brassicaceae</taxon>
        <taxon>Camelineae</taxon>
        <taxon>Arabidopsis</taxon>
    </lineage>
</organism>
<gene>
    <name type="ordered locus">At3g62470</name>
    <name type="ORF">T12C14_170</name>
</gene>
<accession>Q9LZP3</accession>
<protein>
    <recommendedName>
        <fullName>Pentatricopeptide repeat-containing protein At3g62470, mitochondrial</fullName>
    </recommendedName>
</protein>
<dbReference type="EMBL" id="AL162507">
    <property type="protein sequence ID" value="CAB82961.1"/>
    <property type="molecule type" value="Genomic_DNA"/>
</dbReference>
<dbReference type="EMBL" id="CP002686">
    <property type="protein sequence ID" value="AEE80356.1"/>
    <property type="molecule type" value="Genomic_DNA"/>
</dbReference>
<dbReference type="EMBL" id="BT010478">
    <property type="protein sequence ID" value="AAQ65101.1"/>
    <property type="molecule type" value="mRNA"/>
</dbReference>
<dbReference type="PIR" id="T48039">
    <property type="entry name" value="T48039"/>
</dbReference>
<dbReference type="RefSeq" id="NP_191806.1">
    <property type="nucleotide sequence ID" value="NM_116112.3"/>
</dbReference>
<dbReference type="SMR" id="Q9LZP3"/>
<dbReference type="FunCoup" id="Q9LZP3">
    <property type="interactions" value="158"/>
</dbReference>
<dbReference type="STRING" id="3702.Q9LZP3"/>
<dbReference type="PaxDb" id="3702-AT3G62470.1"/>
<dbReference type="ProteomicsDB" id="249200"/>
<dbReference type="EnsemblPlants" id="AT3G62470.1">
    <property type="protein sequence ID" value="AT3G62470.1"/>
    <property type="gene ID" value="AT3G62470"/>
</dbReference>
<dbReference type="GeneID" id="825421"/>
<dbReference type="Gramene" id="AT3G62470.1">
    <property type="protein sequence ID" value="AT3G62470.1"/>
    <property type="gene ID" value="AT3G62470"/>
</dbReference>
<dbReference type="KEGG" id="ath:AT3G62470"/>
<dbReference type="Araport" id="AT3G62470"/>
<dbReference type="TAIR" id="AT3G62470"/>
<dbReference type="eggNOG" id="KOG4197">
    <property type="taxonomic scope" value="Eukaryota"/>
</dbReference>
<dbReference type="HOGENOM" id="CLU_002706_49_20_1"/>
<dbReference type="InParanoid" id="Q9LZP3"/>
<dbReference type="OMA" id="WDEMREN"/>
<dbReference type="PhylomeDB" id="Q9LZP3"/>
<dbReference type="PRO" id="PR:Q9LZP3"/>
<dbReference type="Proteomes" id="UP000006548">
    <property type="component" value="Chromosome 3"/>
</dbReference>
<dbReference type="ExpressionAtlas" id="Q9LZP3">
    <property type="expression patterns" value="baseline and differential"/>
</dbReference>
<dbReference type="GO" id="GO:0005739">
    <property type="term" value="C:mitochondrion"/>
    <property type="evidence" value="ECO:0007669"/>
    <property type="project" value="UniProtKB-SubCell"/>
</dbReference>
<dbReference type="Gene3D" id="1.25.40.10">
    <property type="entry name" value="Tetratricopeptide repeat domain"/>
    <property type="match status" value="3"/>
</dbReference>
<dbReference type="InterPro" id="IPR002885">
    <property type="entry name" value="Pentatricopeptide_rpt"/>
</dbReference>
<dbReference type="InterPro" id="IPR011990">
    <property type="entry name" value="TPR-like_helical_dom_sf"/>
</dbReference>
<dbReference type="NCBIfam" id="TIGR00756">
    <property type="entry name" value="PPR"/>
    <property type="match status" value="9"/>
</dbReference>
<dbReference type="PANTHER" id="PTHR47932">
    <property type="entry name" value="ATPASE EXPRESSION PROTEIN 3"/>
    <property type="match status" value="1"/>
</dbReference>
<dbReference type="PANTHER" id="PTHR47932:SF63">
    <property type="entry name" value="OS08G0290000 PROTEIN"/>
    <property type="match status" value="1"/>
</dbReference>
<dbReference type="Pfam" id="PF01535">
    <property type="entry name" value="PPR"/>
    <property type="match status" value="3"/>
</dbReference>
<dbReference type="Pfam" id="PF13041">
    <property type="entry name" value="PPR_2"/>
    <property type="match status" value="2"/>
</dbReference>
<dbReference type="Pfam" id="PF13812">
    <property type="entry name" value="PPR_3"/>
    <property type="match status" value="1"/>
</dbReference>
<dbReference type="SUPFAM" id="SSF81901">
    <property type="entry name" value="HCP-like"/>
    <property type="match status" value="1"/>
</dbReference>
<dbReference type="PROSITE" id="PS51375">
    <property type="entry name" value="PPR"/>
    <property type="match status" value="10"/>
</dbReference>
<name>PP293_ARATH</name>
<feature type="transit peptide" description="Mitochondrion" evidence="1">
    <location>
        <begin position="1"/>
        <end position="99"/>
    </location>
</feature>
<feature type="chain" id="PRO_0000356152" description="Pentatricopeptide repeat-containing protein At3g62470, mitochondrial">
    <location>
        <begin position="100"/>
        <end position="599"/>
    </location>
</feature>
<feature type="repeat" description="PPR 1">
    <location>
        <begin position="194"/>
        <end position="228"/>
    </location>
</feature>
<feature type="repeat" description="PPR 2">
    <location>
        <begin position="230"/>
        <end position="262"/>
    </location>
</feature>
<feature type="repeat" description="PPR 3">
    <location>
        <begin position="263"/>
        <end position="293"/>
    </location>
</feature>
<feature type="repeat" description="PPR 4">
    <location>
        <begin position="297"/>
        <end position="331"/>
    </location>
</feature>
<feature type="repeat" description="PPR 5">
    <location>
        <begin position="332"/>
        <end position="366"/>
    </location>
</feature>
<feature type="repeat" description="PPR 6">
    <location>
        <begin position="367"/>
        <end position="401"/>
    </location>
</feature>
<feature type="repeat" description="PPR 7">
    <location>
        <begin position="402"/>
        <end position="436"/>
    </location>
</feature>
<feature type="repeat" description="PPR 8">
    <location>
        <begin position="437"/>
        <end position="471"/>
    </location>
</feature>
<feature type="repeat" description="PPR 9">
    <location>
        <begin position="472"/>
        <end position="506"/>
    </location>
</feature>
<feature type="repeat" description="PPR 10">
    <location>
        <begin position="507"/>
        <end position="541"/>
    </location>
</feature>